<protein>
    <recommendedName>
        <fullName evidence="8">Splicing factor U2af large subunit A</fullName>
    </recommendedName>
    <alternativeName>
        <fullName evidence="8">U2 auxiliary factor 65 kDa subunit A</fullName>
    </alternativeName>
    <alternativeName>
        <fullName evidence="8">U2 small nuclear ribonucleoprotein auxiliary factor large subunit A</fullName>
        <shortName evidence="8">U2 snRNP auxiliary factor large subunit A</shortName>
    </alternativeName>
</protein>
<comment type="function">
    <text evidence="1">Necessary for the splicing of pre-mRNA.</text>
</comment>
<comment type="subunit">
    <text evidence="4 5 9">Component of the spliceosome (Probable). Interacts with SUA (PubMed:20525852). Interacts with SF1 in the nucleus (PubMed:24580679).</text>
</comment>
<comment type="interaction">
    <interactant intactId="EBI-4439005">
        <id>O23212</id>
    </interactant>
    <interactant intactId="EBI-4427912">
        <id>F4JCU0</id>
        <label>SUA</label>
    </interactant>
    <organismsDiffer>false</organismsDiffer>
    <experiments>3</experiments>
</comment>
<comment type="subcellular location">
    <subcellularLocation>
        <location evidence="5">Nucleus</location>
    </subcellularLocation>
</comment>
<comment type="alternative products">
    <event type="alternative splicing"/>
    <isoform>
        <id>O23212-1</id>
        <name>1</name>
        <sequence type="displayed"/>
    </isoform>
    <isoform>
        <id>O23212-2</id>
        <name>2</name>
        <sequence type="described" ref="VSP_035548 VSP_035549"/>
    </isoform>
    <isoform>
        <id>O23212-3</id>
        <name>3</name>
        <sequence type="described" ref="VSP_035547 VSP_035550"/>
    </isoform>
</comment>
<comment type="domain">
    <text>N-terminal RS domain has a very strong bias in favor of D over S.</text>
</comment>
<comment type="miscellaneous">
    <molecule>Isoform 2</molecule>
    <text evidence="9">May be due to intron retention.</text>
</comment>
<comment type="miscellaneous">
    <molecule>Isoform 3</molecule>
    <text evidence="9">May be due to a competing acceptor splice site.</text>
</comment>
<comment type="similarity">
    <text evidence="9">Belongs to the splicing factor SR family.</text>
</comment>
<comment type="sequence caution" evidence="9">
    <conflict type="frameshift">
        <sequence resource="EMBL" id="BX827587"/>
    </conflict>
</comment>
<comment type="sequence caution" evidence="9">
    <conflict type="miscellaneous discrepancy">
        <sequence resource="EMBL" id="BX827587"/>
    </conflict>
    <text>Sequencing errors.</text>
</comment>
<keyword id="KW-0025">Alternative splicing</keyword>
<keyword id="KW-0507">mRNA processing</keyword>
<keyword id="KW-0508">mRNA splicing</keyword>
<keyword id="KW-0539">Nucleus</keyword>
<keyword id="KW-1185">Reference proteome</keyword>
<keyword id="KW-0677">Repeat</keyword>
<keyword id="KW-0694">RNA-binding</keyword>
<keyword id="KW-0747">Spliceosome</keyword>
<proteinExistence type="evidence at protein level"/>
<accession>O23212</accession>
<accession>Q3E9P9</accession>
<accession>Q8RXR7</accession>
<sequence length="573" mass="63551">MSEFEDHEGNGTVADAIYDEENGGRDGEIEDQLDSKPKRESRDHERETSRSKDREREKGRDKDRERDSEVSRRSRDRDGEKSKERSRDKDRDHRERHHRSSRHRDHSRERGERRERGGRDDDDYRRSRDRDHDRRRDDRGGRRSRRSRSRSKDRSERRTRSRSPSKSKQRVSGFDMAPPASAMLAAGAAVTGQVPPAPPTLPGAGMFPNMFPLPTGQSFGGLSMMPIQAMTQQATRHARRVYVGGLSPTANEQSVATFFSQVMAAVGGNTAGPGDAVVNVYINHEKKFAFVEMRSVEEASNAMSLDGIIFEGAPVKVRRPSDYNPSLAATLGPSQPSPHLNLAAVGLTPGASGGLEGPDRIFVGGLPYYFTESQVRELLESFGGLKGFDLVKDRETGNSKGYAFCVYQDLSVTDIACAALNGIKMGDKTLTVRRANQGTMLQKPEQENVLLHAQQQIAFQRVMLQPGAVATTVVCLTQVVTEDELRDDEEYGDIMEDMRQEGGKFGALTNVVIPRPSPNGEPVAGLGKVFLKYADTDGSTRARFGMNGRKFGGNEVVAVYYPEDKFEQGDYGA</sequence>
<dbReference type="EMBL" id="Z99708">
    <property type="protein sequence ID" value="CAB16828.1"/>
    <property type="molecule type" value="Genomic_DNA"/>
</dbReference>
<dbReference type="EMBL" id="AL161589">
    <property type="protein sequence ID" value="CAB80335.1"/>
    <property type="molecule type" value="Genomic_DNA"/>
</dbReference>
<dbReference type="EMBL" id="CP002687">
    <property type="protein sequence ID" value="AEE86687.1"/>
    <property type="molecule type" value="Genomic_DNA"/>
</dbReference>
<dbReference type="EMBL" id="CP002687">
    <property type="protein sequence ID" value="AEE86688.1"/>
    <property type="molecule type" value="Genomic_DNA"/>
</dbReference>
<dbReference type="EMBL" id="CP002687">
    <property type="protein sequence ID" value="AEE86689.1"/>
    <property type="molecule type" value="Genomic_DNA"/>
</dbReference>
<dbReference type="EMBL" id="AF462805">
    <property type="protein sequence ID" value="AAL58899.1"/>
    <property type="molecule type" value="mRNA"/>
</dbReference>
<dbReference type="EMBL" id="AY080711">
    <property type="protein sequence ID" value="AAL85029.1"/>
    <property type="molecule type" value="mRNA"/>
</dbReference>
<dbReference type="EMBL" id="AY143980">
    <property type="protein sequence ID" value="AAN28919.1"/>
    <property type="molecule type" value="mRNA"/>
</dbReference>
<dbReference type="EMBL" id="BT000965">
    <property type="protein sequence ID" value="AAN41365.1"/>
    <property type="molecule type" value="mRNA"/>
</dbReference>
<dbReference type="EMBL" id="BX827587">
    <property type="status" value="NOT_ANNOTATED_CDS"/>
    <property type="molecule type" value="mRNA"/>
</dbReference>
<dbReference type="PIR" id="C85433">
    <property type="entry name" value="C85433"/>
</dbReference>
<dbReference type="RefSeq" id="NP_195387.1">
    <molecule id="O23212-1"/>
    <property type="nucleotide sequence ID" value="NM_119833.4"/>
</dbReference>
<dbReference type="RefSeq" id="NP_849509.1">
    <molecule id="O23212-2"/>
    <property type="nucleotide sequence ID" value="NM_179178.3"/>
</dbReference>
<dbReference type="RefSeq" id="NP_974695.1">
    <molecule id="O23212-3"/>
    <property type="nucleotide sequence ID" value="NM_202966.4"/>
</dbReference>
<dbReference type="SMR" id="O23212"/>
<dbReference type="BioGRID" id="15103">
    <property type="interactions" value="15"/>
</dbReference>
<dbReference type="FunCoup" id="O23212">
    <property type="interactions" value="4334"/>
</dbReference>
<dbReference type="IntAct" id="O23212">
    <property type="interactions" value="15"/>
</dbReference>
<dbReference type="STRING" id="3702.O23212"/>
<dbReference type="iPTMnet" id="O23212"/>
<dbReference type="PaxDb" id="3702-AT4G36690.1"/>
<dbReference type="ProteomicsDB" id="228669">
    <molecule id="O23212-1"/>
</dbReference>
<dbReference type="EnsemblPlants" id="AT4G36690.1">
    <molecule id="O23212-1"/>
    <property type="protein sequence ID" value="AT4G36690.1"/>
    <property type="gene ID" value="AT4G36690"/>
</dbReference>
<dbReference type="EnsemblPlants" id="AT4G36690.2">
    <molecule id="O23212-2"/>
    <property type="protein sequence ID" value="AT4G36690.2"/>
    <property type="gene ID" value="AT4G36690"/>
</dbReference>
<dbReference type="EnsemblPlants" id="AT4G36690.3">
    <molecule id="O23212-3"/>
    <property type="protein sequence ID" value="AT4G36690.3"/>
    <property type="gene ID" value="AT4G36690"/>
</dbReference>
<dbReference type="Gramene" id="AT4G36690.1">
    <molecule id="O23212-1"/>
    <property type="protein sequence ID" value="AT4G36690.1"/>
    <property type="gene ID" value="AT4G36690"/>
</dbReference>
<dbReference type="Gramene" id="AT4G36690.2">
    <molecule id="O23212-2"/>
    <property type="protein sequence ID" value="AT4G36690.2"/>
    <property type="gene ID" value="AT4G36690"/>
</dbReference>
<dbReference type="Gramene" id="AT4G36690.3">
    <molecule id="O23212-3"/>
    <property type="protein sequence ID" value="AT4G36690.3"/>
    <property type="gene ID" value="AT4G36690"/>
</dbReference>
<dbReference type="KEGG" id="ath:AT4G36690"/>
<dbReference type="Araport" id="AT4G36690"/>
<dbReference type="TAIR" id="AT4G36690">
    <property type="gene designation" value="ATU2AF65A"/>
</dbReference>
<dbReference type="eggNOG" id="KOG0120">
    <property type="taxonomic scope" value="Eukaryota"/>
</dbReference>
<dbReference type="InParanoid" id="O23212"/>
<dbReference type="OMA" id="LEITWLC"/>
<dbReference type="OrthoDB" id="10266058at2759"/>
<dbReference type="PhylomeDB" id="O23212"/>
<dbReference type="CD-CODE" id="4299E36E">
    <property type="entry name" value="Nucleolus"/>
</dbReference>
<dbReference type="PRO" id="PR:O23212"/>
<dbReference type="Proteomes" id="UP000006548">
    <property type="component" value="Chromosome 4"/>
</dbReference>
<dbReference type="ExpressionAtlas" id="O23212">
    <property type="expression patterns" value="baseline and differential"/>
</dbReference>
<dbReference type="GO" id="GO:0005634">
    <property type="term" value="C:nucleus"/>
    <property type="evidence" value="ECO:0000314"/>
    <property type="project" value="UniProtKB"/>
</dbReference>
<dbReference type="GO" id="GO:0005681">
    <property type="term" value="C:spliceosomal complex"/>
    <property type="evidence" value="ECO:0007669"/>
    <property type="project" value="UniProtKB-KW"/>
</dbReference>
<dbReference type="GO" id="GO:0003729">
    <property type="term" value="F:mRNA binding"/>
    <property type="evidence" value="ECO:0000314"/>
    <property type="project" value="TAIR"/>
</dbReference>
<dbReference type="GO" id="GO:0000398">
    <property type="term" value="P:mRNA splicing, via spliceosome"/>
    <property type="evidence" value="ECO:0000250"/>
    <property type="project" value="TAIR"/>
</dbReference>
<dbReference type="CDD" id="cd12230">
    <property type="entry name" value="RRM1_U2AF65"/>
    <property type="match status" value="1"/>
</dbReference>
<dbReference type="CDD" id="cd12231">
    <property type="entry name" value="RRM2_U2AF65"/>
    <property type="match status" value="1"/>
</dbReference>
<dbReference type="CDD" id="cd12232">
    <property type="entry name" value="RRM3_U2AF65"/>
    <property type="match status" value="1"/>
</dbReference>
<dbReference type="FunFam" id="3.30.70.330:FF:000057">
    <property type="entry name" value="U2 snRNP auxiliary factor large subunit"/>
    <property type="match status" value="1"/>
</dbReference>
<dbReference type="FunFam" id="3.30.70.330:FF:000111">
    <property type="entry name" value="U2 snRNP auxiliary factor large subunit"/>
    <property type="match status" value="1"/>
</dbReference>
<dbReference type="FunFam" id="3.30.70.330:FF:000225">
    <property type="entry name" value="U2 snRNP auxiliary factor large subunit"/>
    <property type="match status" value="1"/>
</dbReference>
<dbReference type="Gene3D" id="3.30.70.330">
    <property type="match status" value="3"/>
</dbReference>
<dbReference type="InterPro" id="IPR012677">
    <property type="entry name" value="Nucleotide-bd_a/b_plait_sf"/>
</dbReference>
<dbReference type="InterPro" id="IPR035979">
    <property type="entry name" value="RBD_domain_sf"/>
</dbReference>
<dbReference type="InterPro" id="IPR000504">
    <property type="entry name" value="RRM_dom"/>
</dbReference>
<dbReference type="InterPro" id="IPR006529">
    <property type="entry name" value="U2AF_lg"/>
</dbReference>
<dbReference type="NCBIfam" id="TIGR01642">
    <property type="entry name" value="U2AF_lg"/>
    <property type="match status" value="1"/>
</dbReference>
<dbReference type="PANTHER" id="PTHR23139">
    <property type="entry name" value="RNA-BINDING PROTEIN"/>
    <property type="match status" value="1"/>
</dbReference>
<dbReference type="Pfam" id="PF00076">
    <property type="entry name" value="RRM_1"/>
    <property type="match status" value="1"/>
</dbReference>
<dbReference type="SMART" id="SM00360">
    <property type="entry name" value="RRM"/>
    <property type="match status" value="2"/>
</dbReference>
<dbReference type="SUPFAM" id="SSF54928">
    <property type="entry name" value="RNA-binding domain, RBD"/>
    <property type="match status" value="2"/>
</dbReference>
<dbReference type="PROSITE" id="PS50102">
    <property type="entry name" value="RRM"/>
    <property type="match status" value="2"/>
</dbReference>
<organism>
    <name type="scientific">Arabidopsis thaliana</name>
    <name type="common">Mouse-ear cress</name>
    <dbReference type="NCBI Taxonomy" id="3702"/>
    <lineage>
        <taxon>Eukaryota</taxon>
        <taxon>Viridiplantae</taxon>
        <taxon>Streptophyta</taxon>
        <taxon>Embryophyta</taxon>
        <taxon>Tracheophyta</taxon>
        <taxon>Spermatophyta</taxon>
        <taxon>Magnoliopsida</taxon>
        <taxon>eudicotyledons</taxon>
        <taxon>Gunneridae</taxon>
        <taxon>Pentapetalae</taxon>
        <taxon>rosids</taxon>
        <taxon>malvids</taxon>
        <taxon>Brassicales</taxon>
        <taxon>Brassicaceae</taxon>
        <taxon>Camelineae</taxon>
        <taxon>Arabidopsis</taxon>
    </lineage>
</organism>
<reference key="1">
    <citation type="journal article" date="1998" name="Nature">
        <title>Analysis of 1.9 Mb of contiguous sequence from chromosome 4 of Arabidopsis thaliana.</title>
        <authorList>
            <person name="Bevan M."/>
            <person name="Bancroft I."/>
            <person name="Bent E."/>
            <person name="Love K."/>
            <person name="Goodman H.M."/>
            <person name="Dean C."/>
            <person name="Bergkamp R."/>
            <person name="Dirkse W."/>
            <person name="van Staveren M."/>
            <person name="Stiekema W."/>
            <person name="Drost L."/>
            <person name="Ridley P."/>
            <person name="Hudson S.-A."/>
            <person name="Patel K."/>
            <person name="Murphy G."/>
            <person name="Piffanelli P."/>
            <person name="Wedler H."/>
            <person name="Wedler E."/>
            <person name="Wambutt R."/>
            <person name="Weitzenegger T."/>
            <person name="Pohl T."/>
            <person name="Terryn N."/>
            <person name="Gielen J."/>
            <person name="Villarroel R."/>
            <person name="De Clercq R."/>
            <person name="van Montagu M."/>
            <person name="Lecharny A."/>
            <person name="Aubourg S."/>
            <person name="Gy I."/>
            <person name="Kreis M."/>
            <person name="Lao N."/>
            <person name="Kavanagh T."/>
            <person name="Hempel S."/>
            <person name="Kotter P."/>
            <person name="Entian K.-D."/>
            <person name="Rieger M."/>
            <person name="Schaefer M."/>
            <person name="Funk B."/>
            <person name="Mueller-Auer S."/>
            <person name="Silvey M."/>
            <person name="James R."/>
            <person name="Monfort A."/>
            <person name="Pons A."/>
            <person name="Puigdomenech P."/>
            <person name="Douka A."/>
            <person name="Voukelatou E."/>
            <person name="Milioni D."/>
            <person name="Hatzopoulos P."/>
            <person name="Piravandi E."/>
            <person name="Obermaier B."/>
            <person name="Hilbert H."/>
            <person name="Duesterhoeft A."/>
            <person name="Moores T."/>
            <person name="Jones J.D.G."/>
            <person name="Eneva T."/>
            <person name="Palme K."/>
            <person name="Benes V."/>
            <person name="Rechmann S."/>
            <person name="Ansorge W."/>
            <person name="Cooke R."/>
            <person name="Berger C."/>
            <person name="Delseny M."/>
            <person name="Voet M."/>
            <person name="Volckaert G."/>
            <person name="Mewes H.-W."/>
            <person name="Klosterman S."/>
            <person name="Schueller C."/>
            <person name="Chalwatzis N."/>
        </authorList>
    </citation>
    <scope>NUCLEOTIDE SEQUENCE [LARGE SCALE GENOMIC DNA]</scope>
    <source>
        <strain>cv. Columbia</strain>
    </source>
</reference>
<reference key="2">
    <citation type="journal article" date="1999" name="Nature">
        <title>Sequence and analysis of chromosome 4 of the plant Arabidopsis thaliana.</title>
        <authorList>
            <person name="Mayer K.F.X."/>
            <person name="Schueller C."/>
            <person name="Wambutt R."/>
            <person name="Murphy G."/>
            <person name="Volckaert G."/>
            <person name="Pohl T."/>
            <person name="Duesterhoeft A."/>
            <person name="Stiekema W."/>
            <person name="Entian K.-D."/>
            <person name="Terryn N."/>
            <person name="Harris B."/>
            <person name="Ansorge W."/>
            <person name="Brandt P."/>
            <person name="Grivell L.A."/>
            <person name="Rieger M."/>
            <person name="Weichselgartner M."/>
            <person name="de Simone V."/>
            <person name="Obermaier B."/>
            <person name="Mache R."/>
            <person name="Mueller M."/>
            <person name="Kreis M."/>
            <person name="Delseny M."/>
            <person name="Puigdomenech P."/>
            <person name="Watson M."/>
            <person name="Schmidtheini T."/>
            <person name="Reichert B."/>
            <person name="Portetelle D."/>
            <person name="Perez-Alonso M."/>
            <person name="Boutry M."/>
            <person name="Bancroft I."/>
            <person name="Vos P."/>
            <person name="Hoheisel J."/>
            <person name="Zimmermann W."/>
            <person name="Wedler H."/>
            <person name="Ridley P."/>
            <person name="Langham S.-A."/>
            <person name="McCullagh B."/>
            <person name="Bilham L."/>
            <person name="Robben J."/>
            <person name="van der Schueren J."/>
            <person name="Grymonprez B."/>
            <person name="Chuang Y.-J."/>
            <person name="Vandenbussche F."/>
            <person name="Braeken M."/>
            <person name="Weltjens I."/>
            <person name="Voet M."/>
            <person name="Bastiaens I."/>
            <person name="Aert R."/>
            <person name="Defoor E."/>
            <person name="Weitzenegger T."/>
            <person name="Bothe G."/>
            <person name="Ramsperger U."/>
            <person name="Hilbert H."/>
            <person name="Braun M."/>
            <person name="Holzer E."/>
            <person name="Brandt A."/>
            <person name="Peters S."/>
            <person name="van Staveren M."/>
            <person name="Dirkse W."/>
            <person name="Mooijman P."/>
            <person name="Klein Lankhorst R."/>
            <person name="Rose M."/>
            <person name="Hauf J."/>
            <person name="Koetter P."/>
            <person name="Berneiser S."/>
            <person name="Hempel S."/>
            <person name="Feldpausch M."/>
            <person name="Lamberth S."/>
            <person name="Van den Daele H."/>
            <person name="De Keyser A."/>
            <person name="Buysshaert C."/>
            <person name="Gielen J."/>
            <person name="Villarroel R."/>
            <person name="De Clercq R."/>
            <person name="van Montagu M."/>
            <person name="Rogers J."/>
            <person name="Cronin A."/>
            <person name="Quail M.A."/>
            <person name="Bray-Allen S."/>
            <person name="Clark L."/>
            <person name="Doggett J."/>
            <person name="Hall S."/>
            <person name="Kay M."/>
            <person name="Lennard N."/>
            <person name="McLay K."/>
            <person name="Mayes R."/>
            <person name="Pettett A."/>
            <person name="Rajandream M.A."/>
            <person name="Lyne M."/>
            <person name="Benes V."/>
            <person name="Rechmann S."/>
            <person name="Borkova D."/>
            <person name="Bloecker H."/>
            <person name="Scharfe M."/>
            <person name="Grimm M."/>
            <person name="Loehnert T.-H."/>
            <person name="Dose S."/>
            <person name="de Haan M."/>
            <person name="Maarse A.C."/>
            <person name="Schaefer M."/>
            <person name="Mueller-Auer S."/>
            <person name="Gabel C."/>
            <person name="Fuchs M."/>
            <person name="Fartmann B."/>
            <person name="Granderath K."/>
            <person name="Dauner D."/>
            <person name="Herzl A."/>
            <person name="Neumann S."/>
            <person name="Argiriou A."/>
            <person name="Vitale D."/>
            <person name="Liguori R."/>
            <person name="Piravandi E."/>
            <person name="Massenet O."/>
            <person name="Quigley F."/>
            <person name="Clabauld G."/>
            <person name="Muendlein A."/>
            <person name="Felber R."/>
            <person name="Schnabl S."/>
            <person name="Hiller R."/>
            <person name="Schmidt W."/>
            <person name="Lecharny A."/>
            <person name="Aubourg S."/>
            <person name="Chefdor F."/>
            <person name="Cooke R."/>
            <person name="Berger C."/>
            <person name="Monfort A."/>
            <person name="Casacuberta E."/>
            <person name="Gibbons T."/>
            <person name="Weber N."/>
            <person name="Vandenbol M."/>
            <person name="Bargues M."/>
            <person name="Terol J."/>
            <person name="Torres A."/>
            <person name="Perez-Perez A."/>
            <person name="Purnelle B."/>
            <person name="Bent E."/>
            <person name="Johnson S."/>
            <person name="Tacon D."/>
            <person name="Jesse T."/>
            <person name="Heijnen L."/>
            <person name="Schwarz S."/>
            <person name="Scholler P."/>
            <person name="Heber S."/>
            <person name="Francs P."/>
            <person name="Bielke C."/>
            <person name="Frishman D."/>
            <person name="Haase D."/>
            <person name="Lemcke K."/>
            <person name="Mewes H.-W."/>
            <person name="Stocker S."/>
            <person name="Zaccaria P."/>
            <person name="Bevan M."/>
            <person name="Wilson R.K."/>
            <person name="de la Bastide M."/>
            <person name="Habermann K."/>
            <person name="Parnell L."/>
            <person name="Dedhia N."/>
            <person name="Gnoj L."/>
            <person name="Schutz K."/>
            <person name="Huang E."/>
            <person name="Spiegel L."/>
            <person name="Sekhon M."/>
            <person name="Murray J."/>
            <person name="Sheet P."/>
            <person name="Cordes M."/>
            <person name="Abu-Threideh J."/>
            <person name="Stoneking T."/>
            <person name="Kalicki J."/>
            <person name="Graves T."/>
            <person name="Harmon G."/>
            <person name="Edwards J."/>
            <person name="Latreille P."/>
            <person name="Courtney L."/>
            <person name="Cloud J."/>
            <person name="Abbott A."/>
            <person name="Scott K."/>
            <person name="Johnson D."/>
            <person name="Minx P."/>
            <person name="Bentley D."/>
            <person name="Fulton B."/>
            <person name="Miller N."/>
            <person name="Greco T."/>
            <person name="Kemp K."/>
            <person name="Kramer J."/>
            <person name="Fulton L."/>
            <person name="Mardis E."/>
            <person name="Dante M."/>
            <person name="Pepin K."/>
            <person name="Hillier L.W."/>
            <person name="Nelson J."/>
            <person name="Spieth J."/>
            <person name="Ryan E."/>
            <person name="Andrews S."/>
            <person name="Geisel C."/>
            <person name="Layman D."/>
            <person name="Du H."/>
            <person name="Ali J."/>
            <person name="Berghoff A."/>
            <person name="Jones K."/>
            <person name="Drone K."/>
            <person name="Cotton M."/>
            <person name="Joshu C."/>
            <person name="Antonoiu B."/>
            <person name="Zidanic M."/>
            <person name="Strong C."/>
            <person name="Sun H."/>
            <person name="Lamar B."/>
            <person name="Yordan C."/>
            <person name="Ma P."/>
            <person name="Zhong J."/>
            <person name="Preston R."/>
            <person name="Vil D."/>
            <person name="Shekher M."/>
            <person name="Matero A."/>
            <person name="Shah R."/>
            <person name="Swaby I.K."/>
            <person name="O'Shaughnessy A."/>
            <person name="Rodriguez M."/>
            <person name="Hoffman J."/>
            <person name="Till S."/>
            <person name="Granat S."/>
            <person name="Shohdy N."/>
            <person name="Hasegawa A."/>
            <person name="Hameed A."/>
            <person name="Lodhi M."/>
            <person name="Johnson A."/>
            <person name="Chen E."/>
            <person name="Marra M.A."/>
            <person name="Martienssen R."/>
            <person name="McCombie W.R."/>
        </authorList>
    </citation>
    <scope>NUCLEOTIDE SEQUENCE [LARGE SCALE GENOMIC DNA]</scope>
    <source>
        <strain>cv. Columbia</strain>
    </source>
</reference>
<reference key="3">
    <citation type="journal article" date="2017" name="Plant J.">
        <title>Araport11: a complete reannotation of the Arabidopsis thaliana reference genome.</title>
        <authorList>
            <person name="Cheng C.Y."/>
            <person name="Krishnakumar V."/>
            <person name="Chan A.P."/>
            <person name="Thibaud-Nissen F."/>
            <person name="Schobel S."/>
            <person name="Town C.D."/>
        </authorList>
    </citation>
    <scope>GENOME REANNOTATION</scope>
    <source>
        <strain>cv. Columbia</strain>
    </source>
</reference>
<reference key="4">
    <citation type="journal article" date="2003" name="Science">
        <title>Empirical analysis of transcriptional activity in the Arabidopsis genome.</title>
        <authorList>
            <person name="Yamada K."/>
            <person name="Lim J."/>
            <person name="Dale J.M."/>
            <person name="Chen H."/>
            <person name="Shinn P."/>
            <person name="Palm C.J."/>
            <person name="Southwick A.M."/>
            <person name="Wu H.C."/>
            <person name="Kim C.J."/>
            <person name="Nguyen M."/>
            <person name="Pham P.K."/>
            <person name="Cheuk R.F."/>
            <person name="Karlin-Newmann G."/>
            <person name="Liu S.X."/>
            <person name="Lam B."/>
            <person name="Sakano H."/>
            <person name="Wu T."/>
            <person name="Yu G."/>
            <person name="Miranda M."/>
            <person name="Quach H.L."/>
            <person name="Tripp M."/>
            <person name="Chang C.H."/>
            <person name="Lee J.M."/>
            <person name="Toriumi M.J."/>
            <person name="Chan M.M."/>
            <person name="Tang C.C."/>
            <person name="Onodera C.S."/>
            <person name="Deng J.M."/>
            <person name="Akiyama K."/>
            <person name="Ansari Y."/>
            <person name="Arakawa T."/>
            <person name="Banh J."/>
            <person name="Banno F."/>
            <person name="Bowser L."/>
            <person name="Brooks S.Y."/>
            <person name="Carninci P."/>
            <person name="Chao Q."/>
            <person name="Choy N."/>
            <person name="Enju A."/>
            <person name="Goldsmith A.D."/>
            <person name="Gurjal M."/>
            <person name="Hansen N.F."/>
            <person name="Hayashizaki Y."/>
            <person name="Johnson-Hopson C."/>
            <person name="Hsuan V.W."/>
            <person name="Iida K."/>
            <person name="Karnes M."/>
            <person name="Khan S."/>
            <person name="Koesema E."/>
            <person name="Ishida J."/>
            <person name="Jiang P.X."/>
            <person name="Jones T."/>
            <person name="Kawai J."/>
            <person name="Kamiya A."/>
            <person name="Meyers C."/>
            <person name="Nakajima M."/>
            <person name="Narusaka M."/>
            <person name="Seki M."/>
            <person name="Sakurai T."/>
            <person name="Satou M."/>
            <person name="Tamse R."/>
            <person name="Vaysberg M."/>
            <person name="Wallender E.K."/>
            <person name="Wong C."/>
            <person name="Yamamura Y."/>
            <person name="Yuan S."/>
            <person name="Shinozaki K."/>
            <person name="Davis R.W."/>
            <person name="Theologis A."/>
            <person name="Ecker J.R."/>
        </authorList>
    </citation>
    <scope>NUCLEOTIDE SEQUENCE [LARGE SCALE MRNA] (ISOFORMS 1 AND 2)</scope>
    <source>
        <strain>cv. Columbia</strain>
    </source>
</reference>
<reference key="5">
    <citation type="journal article" date="2004" name="Genome Res.">
        <title>Whole genome sequence comparisons and 'full-length' cDNA sequences: a combined approach to evaluate and improve Arabidopsis genome annotation.</title>
        <authorList>
            <person name="Castelli V."/>
            <person name="Aury J.-M."/>
            <person name="Jaillon O."/>
            <person name="Wincker P."/>
            <person name="Clepet C."/>
            <person name="Menard M."/>
            <person name="Cruaud C."/>
            <person name="Quetier F."/>
            <person name="Scarpelli C."/>
            <person name="Schaechter V."/>
            <person name="Temple G."/>
            <person name="Caboche M."/>
            <person name="Weissenbach J."/>
            <person name="Salanoubat M."/>
        </authorList>
    </citation>
    <scope>NUCLEOTIDE SEQUENCE [LARGE SCALE MRNA] OF 83-573 (ISOFORM 3)</scope>
    <source>
        <strain>cv. Columbia</strain>
    </source>
</reference>
<reference key="6">
    <citation type="journal article" date="2010" name="Plant Cell">
        <title>The conserved splicing factor SUA controls alternative splicing of the developmental regulator ABI3 in Arabidopsis.</title>
        <authorList>
            <person name="Sugliani M."/>
            <person name="Brambilla V."/>
            <person name="Clerkx E.J."/>
            <person name="Koornneef M."/>
            <person name="Soppe W.J."/>
        </authorList>
    </citation>
    <scope>INTERACTION WITH SUA</scope>
    <source>
        <strain>cv. Landsberg erecta</strain>
    </source>
</reference>
<reference key="7">
    <citation type="journal article" date="2014" name="Plant J.">
        <title>A homolog of splicing factor SF1 is essential for development and is involved in the alternative splicing of pre-mRNA in Arabidopsis thaliana.</title>
        <authorList>
            <person name="Jang Y.H."/>
            <person name="Park H.-Y."/>
            <person name="Lee K.C."/>
            <person name="Thu M.P."/>
            <person name="Kim S.-K."/>
            <person name="Suh M.C."/>
            <person name="Kang H."/>
            <person name="Kim J.-K."/>
        </authorList>
    </citation>
    <scope>INTERACTION WITH SF1</scope>
    <scope>SUBCELLULAR LOCATION</scope>
    <source>
        <strain>cv. Columbia</strain>
    </source>
</reference>
<feature type="chain" id="PRO_0000352267" description="Splicing factor U2af large subunit A">
    <location>
        <begin position="1"/>
        <end position="573"/>
    </location>
</feature>
<feature type="domain" description="RRM 1" evidence="2">
    <location>
        <begin position="239"/>
        <end position="322"/>
    </location>
</feature>
<feature type="domain" description="RRM 2" evidence="2">
    <location>
        <begin position="359"/>
        <end position="437"/>
    </location>
</feature>
<feature type="domain" description="RRM 3" evidence="2">
    <location>
        <begin position="478"/>
        <end position="564"/>
    </location>
</feature>
<feature type="region of interest" description="Disordered" evidence="3">
    <location>
        <begin position="1"/>
        <end position="175"/>
    </location>
</feature>
<feature type="compositionally biased region" description="Basic and acidic residues" evidence="3">
    <location>
        <begin position="22"/>
        <end position="93"/>
    </location>
</feature>
<feature type="compositionally biased region" description="Basic residues" evidence="3">
    <location>
        <begin position="94"/>
        <end position="105"/>
    </location>
</feature>
<feature type="compositionally biased region" description="Basic and acidic residues" evidence="3">
    <location>
        <begin position="106"/>
        <end position="141"/>
    </location>
</feature>
<feature type="compositionally biased region" description="Basic residues" evidence="3">
    <location>
        <begin position="159"/>
        <end position="169"/>
    </location>
</feature>
<feature type="splice variant" id="VSP_035547" description="In isoform 3." evidence="7">
    <original>GALTNVVIPRPSPNGEPVAGLGKVFLKYADTDGSTRARFGMNGRKFGGNEVVAVYYPEDK</original>
    <variation>AFCYKESALTYTDRRLHKPPNLFITNGHYFLKEKTDLFLSVFSCLVFEMFCSLTLKMQVL</variation>
    <location>
        <begin position="506"/>
        <end position="565"/>
    </location>
</feature>
<feature type="splice variant" id="VSP_035548" description="In isoform 2." evidence="6">
    <original>ALTNVVIPRPSPNGEPVAGLGKVFLKYADTDGSTRA</original>
    <variation>KRPLNCAIWSILKYKIKSILICLSVFLVVLFYSLLL</variation>
    <location>
        <begin position="507"/>
        <end position="542"/>
    </location>
</feature>
<feature type="splice variant" id="VSP_035549" description="In isoform 2." evidence="6">
    <location>
        <begin position="543"/>
        <end position="573"/>
    </location>
</feature>
<feature type="splice variant" id="VSP_035550" description="In isoform 3." evidence="7">
    <location>
        <begin position="566"/>
        <end position="573"/>
    </location>
</feature>
<evidence type="ECO:0000250" key="1"/>
<evidence type="ECO:0000255" key="2">
    <source>
        <dbReference type="PROSITE-ProRule" id="PRU00176"/>
    </source>
</evidence>
<evidence type="ECO:0000256" key="3">
    <source>
        <dbReference type="SAM" id="MobiDB-lite"/>
    </source>
</evidence>
<evidence type="ECO:0000269" key="4">
    <source>
    </source>
</evidence>
<evidence type="ECO:0000269" key="5">
    <source>
    </source>
</evidence>
<evidence type="ECO:0000303" key="6">
    <source>
    </source>
</evidence>
<evidence type="ECO:0000303" key="7">
    <source>
    </source>
</evidence>
<evidence type="ECO:0000303" key="8">
    <source>
    </source>
</evidence>
<evidence type="ECO:0000305" key="9"/>
<evidence type="ECO:0000312" key="10">
    <source>
        <dbReference type="Araport" id="AT4G36690"/>
    </source>
</evidence>
<evidence type="ECO:0000312" key="11">
    <source>
        <dbReference type="EMBL" id="CAB16828.1"/>
    </source>
</evidence>
<name>U2A2A_ARATH</name>
<gene>
    <name evidence="8" type="primary">U2AF65A</name>
    <name evidence="10" type="ordered locus">At4g36690</name>
    <name evidence="11" type="ORF">C7A10.670</name>
</gene>